<feature type="signal peptide" evidence="2">
    <location>
        <begin position="1"/>
        <end position="22"/>
    </location>
</feature>
<feature type="peptide" id="PRO_0000231511" description="Putative antimicrobial peptide clone 5">
    <location>
        <begin position="23"/>
        <end position="39"/>
    </location>
</feature>
<feature type="propeptide" id="PRO_0000231512">
    <location>
        <begin position="45"/>
        <end position="73"/>
    </location>
</feature>
<organism>
    <name type="scientific">Tityus costatus</name>
    <name type="common">Brazilian scorpion</name>
    <dbReference type="NCBI Taxonomy" id="309814"/>
    <lineage>
        <taxon>Eukaryota</taxon>
        <taxon>Metazoa</taxon>
        <taxon>Ecdysozoa</taxon>
        <taxon>Arthropoda</taxon>
        <taxon>Chelicerata</taxon>
        <taxon>Arachnida</taxon>
        <taxon>Scorpiones</taxon>
        <taxon>Buthida</taxon>
        <taxon>Buthoidea</taxon>
        <taxon>Buthidae</taxon>
        <taxon>Tityus</taxon>
    </lineage>
</organism>
<accession>Q5G8B4</accession>
<name>NDB4T_TITCO</name>
<dbReference type="EMBL" id="AY740687">
    <property type="protein sequence ID" value="AAW72457.1"/>
    <property type="molecule type" value="mRNA"/>
</dbReference>
<dbReference type="SMR" id="Q5G8B4"/>
<dbReference type="GO" id="GO:0005576">
    <property type="term" value="C:extracellular region"/>
    <property type="evidence" value="ECO:0007669"/>
    <property type="project" value="UniProtKB-SubCell"/>
</dbReference>
<dbReference type="GO" id="GO:0042742">
    <property type="term" value="P:defense response to bacterium"/>
    <property type="evidence" value="ECO:0007669"/>
    <property type="project" value="UniProtKB-KW"/>
</dbReference>
<sequence>MQIKHLITLFFLVLIGADQCSAFFSLIPSLIGGLVFAIKGRKKREVSPQIDQYRNFQKREAELEELLDRLPMY</sequence>
<keyword id="KW-0044">Antibiotic</keyword>
<keyword id="KW-0929">Antimicrobial</keyword>
<keyword id="KW-0165">Cleavage on pair of basic residues</keyword>
<keyword id="KW-0964">Secreted</keyword>
<keyword id="KW-0732">Signal</keyword>
<protein>
    <recommendedName>
        <fullName>Putative antimicrobial peptide clone 5</fullName>
    </recommendedName>
</protein>
<comment type="function">
    <text evidence="1">Antibacterial peptide.</text>
</comment>
<comment type="subcellular location">
    <subcellularLocation>
        <location evidence="1">Secreted</location>
    </subcellularLocation>
</comment>
<comment type="tissue specificity">
    <text evidence="3">Expressed by the venom gland.</text>
</comment>
<comment type="similarity">
    <text evidence="3">Belongs to the non-disulfide-bridged peptide (NDBP) superfamily. Short antimicrobial peptide (group 4) family.</text>
</comment>
<reference key="1">
    <citation type="journal article" date="2005" name="Toxicon">
        <title>The Brazilian scorpion Tityus costatus Karsch: genes, peptides and function.</title>
        <authorList>
            <person name="Diego-Garcia E."/>
            <person name="Batista C.V.F."/>
            <person name="Garcia-Gomez B.I."/>
            <person name="Lucas S."/>
            <person name="Candido D.M."/>
            <person name="Gomez-Lagunas F."/>
            <person name="Possani L.D."/>
        </authorList>
    </citation>
    <scope>NUCLEOTIDE SEQUENCE [MRNA]</scope>
    <source>
        <tissue>Venom gland</tissue>
    </source>
</reference>
<proteinExistence type="inferred from homology"/>
<evidence type="ECO:0000250" key="1"/>
<evidence type="ECO:0000255" key="2"/>
<evidence type="ECO:0000305" key="3"/>